<comment type="function">
    <text evidence="2">Lignin degradation and detoxification of lignin-derived products.</text>
</comment>
<comment type="catalytic activity">
    <reaction evidence="2">
        <text>4 hydroquinone + O2 = 4 benzosemiquinone + 2 H2O</text>
        <dbReference type="Rhea" id="RHEA:11276"/>
        <dbReference type="ChEBI" id="CHEBI:15377"/>
        <dbReference type="ChEBI" id="CHEBI:15379"/>
        <dbReference type="ChEBI" id="CHEBI:17594"/>
        <dbReference type="ChEBI" id="CHEBI:17977"/>
        <dbReference type="EC" id="1.10.3.2"/>
    </reaction>
</comment>
<comment type="cofactor">
    <cofactor evidence="2">
        <name>Cu cation</name>
        <dbReference type="ChEBI" id="CHEBI:23378"/>
    </cofactor>
    <text evidence="2">Binds 4 Cu cations per monomer.</text>
</comment>
<comment type="biophysicochemical properties">
    <phDependence>
        <text evidence="5">Optimum pH is 6.</text>
    </phDependence>
</comment>
<comment type="subunit">
    <text evidence="3">Homodimer.</text>
</comment>
<comment type="subcellular location">
    <subcellularLocation>
        <location evidence="2">Secreted</location>
    </subcellularLocation>
</comment>
<comment type="tissue specificity">
    <text evidence="5">In mycelia, at a lower level than LCC4.</text>
</comment>
<comment type="similarity">
    <text evidence="6">Belongs to the multicopper oxidase family.</text>
</comment>
<feature type="signal peptide" evidence="4">
    <location>
        <begin position="1"/>
        <end position="19"/>
    </location>
</feature>
<feature type="chain" id="PRO_0000002935" description="Laccase-1">
    <location>
        <begin position="20"/>
        <end position="576"/>
    </location>
</feature>
<feature type="domain" description="Plastocyanin-like 1">
    <location>
        <begin position="21"/>
        <end position="145"/>
    </location>
</feature>
<feature type="domain" description="Plastocyanin-like 2">
    <location>
        <begin position="157"/>
        <end position="304"/>
    </location>
</feature>
<feature type="domain" description="Plastocyanin-like 3">
    <location>
        <begin position="376"/>
        <end position="576"/>
    </location>
</feature>
<feature type="binding site" description="type 2 copper site" evidence="1">
    <location>
        <position position="82"/>
    </location>
    <ligand>
        <name>Cu cation</name>
        <dbReference type="ChEBI" id="CHEBI:23378"/>
        <label>1</label>
    </ligand>
</feature>
<feature type="binding site" description="type 3 copper site" evidence="1">
    <location>
        <position position="84"/>
    </location>
    <ligand>
        <name>Cu cation</name>
        <dbReference type="ChEBI" id="CHEBI:23378"/>
        <label>2</label>
    </ligand>
</feature>
<feature type="binding site" description="type 3 copper site" evidence="1">
    <location>
        <position position="127"/>
    </location>
    <ligand>
        <name>Cu cation</name>
        <dbReference type="ChEBI" id="CHEBI:23378"/>
        <label>2</label>
    </ligand>
</feature>
<feature type="binding site" description="type 3 copper site" evidence="1">
    <location>
        <position position="129"/>
    </location>
    <ligand>
        <name>Cu cation</name>
        <dbReference type="ChEBI" id="CHEBI:23378"/>
        <label>3</label>
    </ligand>
</feature>
<feature type="binding site" description="type 1 copper site" evidence="1">
    <location>
        <position position="471"/>
    </location>
    <ligand>
        <name>Cu cation</name>
        <dbReference type="ChEBI" id="CHEBI:23378"/>
        <label>4</label>
    </ligand>
</feature>
<feature type="binding site" description="type 2 copper site" evidence="1">
    <location>
        <position position="474"/>
    </location>
    <ligand>
        <name>Cu cation</name>
        <dbReference type="ChEBI" id="CHEBI:23378"/>
        <label>1</label>
    </ligand>
</feature>
<feature type="binding site" description="type 3 copper site" evidence="1">
    <location>
        <position position="476"/>
    </location>
    <ligand>
        <name>Cu cation</name>
        <dbReference type="ChEBI" id="CHEBI:23378"/>
        <label>3</label>
    </ligand>
</feature>
<feature type="binding site" description="type 3 copper site" evidence="1">
    <location>
        <position position="523"/>
    </location>
    <ligand>
        <name>Cu cation</name>
        <dbReference type="ChEBI" id="CHEBI:23378"/>
        <label>3</label>
    </ligand>
</feature>
<feature type="binding site" description="type 1 copper site" evidence="1">
    <location>
        <position position="524"/>
    </location>
    <ligand>
        <name>Cu cation</name>
        <dbReference type="ChEBI" id="CHEBI:23378"/>
        <label>4</label>
    </ligand>
</feature>
<feature type="binding site" description="type 3 copper site" evidence="1">
    <location>
        <position position="525"/>
    </location>
    <ligand>
        <name>Cu cation</name>
        <dbReference type="ChEBI" id="CHEBI:23378"/>
        <label>2</label>
    </ligand>
</feature>
<feature type="binding site" description="type 1 copper site" evidence="1">
    <location>
        <position position="529"/>
    </location>
    <ligand>
        <name>Cu cation</name>
        <dbReference type="ChEBI" id="CHEBI:23378"/>
        <label>4</label>
    </ligand>
</feature>
<feature type="glycosylation site" description="N-linked (GlcNAc...) asparagine" evidence="4">
    <location>
        <position position="41"/>
    </location>
</feature>
<feature type="glycosylation site" description="N-linked (GlcNAc...) asparagine" evidence="4">
    <location>
        <position position="182"/>
    </location>
</feature>
<feature type="glycosylation site" description="N-linked (GlcNAc...) asparagine" evidence="4">
    <location>
        <position position="228"/>
    </location>
</feature>
<feature type="glycosylation site" description="N-linked (GlcNAc...) asparagine" evidence="4">
    <location>
        <position position="294"/>
    </location>
</feature>
<feature type="glycosylation site" description="N-linked (GlcNAc...) asparagine" evidence="4">
    <location>
        <position position="368"/>
    </location>
</feature>
<feature type="disulfide bond" evidence="2">
    <location>
        <begin position="103"/>
        <end position="562"/>
    </location>
</feature>
<accession>P56193</accession>
<keyword id="KW-0186">Copper</keyword>
<keyword id="KW-1015">Disulfide bond</keyword>
<keyword id="KW-0325">Glycoprotein</keyword>
<keyword id="KW-0439">Lignin degradation</keyword>
<keyword id="KW-0479">Metal-binding</keyword>
<keyword id="KW-0560">Oxidoreductase</keyword>
<keyword id="KW-0677">Repeat</keyword>
<keyword id="KW-0964">Secreted</keyword>
<keyword id="KW-0732">Signal</keyword>
<dbReference type="EC" id="1.10.3.2" evidence="2"/>
<dbReference type="EMBL" id="Z54275">
    <property type="status" value="NOT_ANNOTATED_CDS"/>
    <property type="molecule type" value="Genomic_DNA"/>
</dbReference>
<dbReference type="PIR" id="S68117">
    <property type="entry name" value="S68117"/>
</dbReference>
<dbReference type="SMR" id="P56193"/>
<dbReference type="GlyCosmos" id="P56193">
    <property type="glycosylation" value="5 sites, No reported glycans"/>
</dbReference>
<dbReference type="GO" id="GO:0005576">
    <property type="term" value="C:extracellular region"/>
    <property type="evidence" value="ECO:0007669"/>
    <property type="project" value="UniProtKB-SubCell"/>
</dbReference>
<dbReference type="GO" id="GO:0005507">
    <property type="term" value="F:copper ion binding"/>
    <property type="evidence" value="ECO:0007669"/>
    <property type="project" value="InterPro"/>
</dbReference>
<dbReference type="GO" id="GO:0052716">
    <property type="term" value="F:hydroquinone:oxygen oxidoreductase activity"/>
    <property type="evidence" value="ECO:0007669"/>
    <property type="project" value="UniProtKB-EC"/>
</dbReference>
<dbReference type="GO" id="GO:0046274">
    <property type="term" value="P:lignin catabolic process"/>
    <property type="evidence" value="ECO:0007669"/>
    <property type="project" value="UniProtKB-KW"/>
</dbReference>
<dbReference type="CDD" id="cd13903">
    <property type="entry name" value="CuRO_3_Tv-LCC_like"/>
    <property type="match status" value="1"/>
</dbReference>
<dbReference type="FunFam" id="2.60.40.420:FF:000045">
    <property type="entry name" value="Laccase 2"/>
    <property type="match status" value="1"/>
</dbReference>
<dbReference type="Gene3D" id="2.60.40.420">
    <property type="entry name" value="Cupredoxins - blue copper proteins"/>
    <property type="match status" value="3"/>
</dbReference>
<dbReference type="InterPro" id="IPR011707">
    <property type="entry name" value="Cu-oxidase-like_N"/>
</dbReference>
<dbReference type="InterPro" id="IPR001117">
    <property type="entry name" value="Cu-oxidase_2nd"/>
</dbReference>
<dbReference type="InterPro" id="IPR011706">
    <property type="entry name" value="Cu-oxidase_C"/>
</dbReference>
<dbReference type="InterPro" id="IPR045087">
    <property type="entry name" value="Cu-oxidase_fam"/>
</dbReference>
<dbReference type="InterPro" id="IPR033138">
    <property type="entry name" value="Cu_oxidase_CS"/>
</dbReference>
<dbReference type="InterPro" id="IPR008972">
    <property type="entry name" value="Cupredoxin"/>
</dbReference>
<dbReference type="PANTHER" id="PTHR11709:SF511">
    <property type="entry name" value="LACCASE"/>
    <property type="match status" value="1"/>
</dbReference>
<dbReference type="PANTHER" id="PTHR11709">
    <property type="entry name" value="MULTI-COPPER OXIDASE"/>
    <property type="match status" value="1"/>
</dbReference>
<dbReference type="Pfam" id="PF00394">
    <property type="entry name" value="Cu-oxidase"/>
    <property type="match status" value="1"/>
</dbReference>
<dbReference type="Pfam" id="PF07731">
    <property type="entry name" value="Cu-oxidase_2"/>
    <property type="match status" value="1"/>
</dbReference>
<dbReference type="Pfam" id="PF07732">
    <property type="entry name" value="Cu-oxidase_3"/>
    <property type="match status" value="1"/>
</dbReference>
<dbReference type="SUPFAM" id="SSF49503">
    <property type="entry name" value="Cupredoxins"/>
    <property type="match status" value="3"/>
</dbReference>
<dbReference type="PROSITE" id="PS00079">
    <property type="entry name" value="MULTICOPPER_OXIDASE1"/>
    <property type="match status" value="1"/>
</dbReference>
<protein>
    <recommendedName>
        <fullName>Laccase-1</fullName>
        <ecNumber evidence="2">1.10.3.2</ecNumber>
    </recommendedName>
    <alternativeName>
        <fullName>Benzenediol:oxygen oxidoreductase 1</fullName>
    </alternativeName>
    <alternativeName>
        <fullName>Diphenol oxidase 1</fullName>
    </alternativeName>
    <alternativeName>
        <fullName>Urishiol oxidase 1</fullName>
    </alternativeName>
</protein>
<reference key="1">
    <citation type="journal article" date="1996" name="Curr. Genet.">
        <title>The identification and characterization of four laccases from the plant pathogenic fungus Rhizoctonia solani.</title>
        <authorList>
            <person name="Wahleithner J.A."/>
            <person name="Xu F."/>
            <person name="Brown K.M."/>
            <person name="Brown S.H."/>
            <person name="Golightly E.J."/>
            <person name="Halkier T."/>
            <person name="Kauppinen S."/>
            <person name="Pederson A."/>
            <person name="Schneider P."/>
        </authorList>
    </citation>
    <scope>NUCLEOTIDE SEQUENCE [GENOMIC DNA]</scope>
    <scope>BIOPHYSICOCHEMICAL PROPERTIES</scope>
    <scope>TISSUE SPECIFICITY</scope>
    <source>
        <strain>R22 / IMI 358730 / AG-6</strain>
    </source>
</reference>
<evidence type="ECO:0000250" key="1">
    <source>
        <dbReference type="UniProtKB" id="D0VWU3"/>
    </source>
</evidence>
<evidence type="ECO:0000250" key="2">
    <source>
        <dbReference type="UniProtKB" id="Q70KY3"/>
    </source>
</evidence>
<evidence type="ECO:0000250" key="3">
    <source>
        <dbReference type="UniProtKB" id="Q99046"/>
    </source>
</evidence>
<evidence type="ECO:0000255" key="4"/>
<evidence type="ECO:0000269" key="5">
    <source>
    </source>
</evidence>
<evidence type="ECO:0000305" key="6"/>
<proteinExistence type="evidence at protein level"/>
<organism>
    <name type="scientific">Thanatephorus cucumeris</name>
    <name type="common">Black scurf of potato</name>
    <name type="synonym">Rhizoctonia solani</name>
    <dbReference type="NCBI Taxonomy" id="107832"/>
    <lineage>
        <taxon>Eukaryota</taxon>
        <taxon>Fungi</taxon>
        <taxon>Dikarya</taxon>
        <taxon>Basidiomycota</taxon>
        <taxon>Agaricomycotina</taxon>
        <taxon>Agaricomycetes</taxon>
        <taxon>Cantharellales</taxon>
        <taxon>Ceratobasidiaceae</taxon>
        <taxon>Thanatephorus</taxon>
    </lineage>
</organism>
<gene>
    <name type="primary">LCC1</name>
</gene>
<sequence length="576" mass="64377">MARTTFLVSVSLFVSAVLARTVEYGLKISDGEIAPDGVKRNATLVNGGYPGPLIFANKGDTLKVKVQNKLTNPEMYRTTSIHWHGLLQHRNADDDGPSFVTQCPIVPRESYTYTIPLDDQTGTYWYHSHLSSQYVDGLRGPLVIYDPKDPHRRLYDVDDEKTVLIIGDWYHESSKAILASGNITRQRPVSATINGKGRFDPDNTPANPDTLYTLKVKRGKRYRLRVINSSEIASFRFSVEGHKVTVIAADGVSTKPYQVDAFDILAGQRIDCVVEANQEPDTYWINAPLTNVPNKTAQALLVYEEDRRPYHPPKGPYRKWSVSEAIIKYWNHKHKHGRGLLSGHGGLKARMIEGSHHLHSRSVVKRQNETTTVVMDESKLVPLEYPGAACGSKPADLVLDLTFGLNFATGHWMINGIPYESPKIPTLLKILTDEDGVTESDFTKEEHTVILPKNKCIEFNIKGNSGIPITHPVHLHGHTWDVVQFGNNPPNYVNPPRRDVVGSTDAGVRIQFKTDNPGPWFLHCHIDWHLEEGFAMVFAEAPEAVKGGPKSVAVDSQWEGLCGKYDNWLKSNPGQL</sequence>
<name>LAC1_THACU</name>